<gene>
    <name type="primary">SCD5</name>
    <name type="synonym">FTB1</name>
    <name type="ordered locus">YOR329C</name>
</gene>
<evidence type="ECO:0000256" key="1">
    <source>
        <dbReference type="SAM" id="MobiDB-lite"/>
    </source>
</evidence>
<evidence type="ECO:0000269" key="2">
    <source>
    </source>
</evidence>
<evidence type="ECO:0000269" key="3">
    <source>
    </source>
</evidence>
<evidence type="ECO:0000269" key="4">
    <source>
    </source>
</evidence>
<evidence type="ECO:0000269" key="5">
    <source>
    </source>
</evidence>
<evidence type="ECO:0000269" key="6">
    <source>
    </source>
</evidence>
<evidence type="ECO:0007744" key="7">
    <source>
    </source>
</evidence>
<organism>
    <name type="scientific">Saccharomyces cerevisiae (strain ATCC 204508 / S288c)</name>
    <name type="common">Baker's yeast</name>
    <dbReference type="NCBI Taxonomy" id="559292"/>
    <lineage>
        <taxon>Eukaryota</taxon>
        <taxon>Fungi</taxon>
        <taxon>Dikarya</taxon>
        <taxon>Ascomycota</taxon>
        <taxon>Saccharomycotina</taxon>
        <taxon>Saccharomycetes</taxon>
        <taxon>Saccharomycetales</taxon>
        <taxon>Saccharomycetaceae</taxon>
        <taxon>Saccharomyces</taxon>
    </lineage>
</organism>
<feature type="chain" id="PRO_0000097621" description="Protein SCD5">
    <location>
        <begin position="1"/>
        <end position="872"/>
    </location>
</feature>
<feature type="repeat" description="1-1">
    <location>
        <begin position="405"/>
        <end position="424"/>
    </location>
</feature>
<feature type="repeat" description="1-2">
    <location>
        <begin position="439"/>
        <end position="458"/>
    </location>
</feature>
<feature type="repeat" description="1-3">
    <location>
        <begin position="479"/>
        <end position="498"/>
    </location>
</feature>
<feature type="repeat" description="2-1">
    <location>
        <begin position="534"/>
        <end position="545"/>
    </location>
</feature>
<feature type="repeat" description="2-2">
    <location>
        <begin position="564"/>
        <end position="575"/>
    </location>
</feature>
<feature type="repeat" description="2-3">
    <location>
        <begin position="593"/>
        <end position="604"/>
    </location>
</feature>
<feature type="repeat" description="2-4">
    <location>
        <begin position="608"/>
        <end position="619"/>
    </location>
</feature>
<feature type="repeat" description="2-5">
    <location>
        <begin position="623"/>
        <end position="634"/>
    </location>
</feature>
<feature type="repeat" description="2-5">
    <location>
        <begin position="636"/>
        <end position="647"/>
    </location>
</feature>
<feature type="repeat" description="2-7">
    <location>
        <begin position="650"/>
        <end position="661"/>
    </location>
</feature>
<feature type="repeat" description="2-8">
    <location>
        <begin position="683"/>
        <end position="694"/>
    </location>
</feature>
<feature type="repeat" description="2-9">
    <location>
        <begin position="717"/>
        <end position="728"/>
    </location>
</feature>
<feature type="region of interest" description="Disordered" evidence="1">
    <location>
        <begin position="1"/>
        <end position="98"/>
    </location>
</feature>
<feature type="region of interest" description="Disordered" evidence="1">
    <location>
        <begin position="209"/>
        <end position="239"/>
    </location>
</feature>
<feature type="region of interest" description="Disordered" evidence="1">
    <location>
        <begin position="280"/>
        <end position="321"/>
    </location>
</feature>
<feature type="region of interest" description="Disordered" evidence="1">
    <location>
        <begin position="338"/>
        <end position="358"/>
    </location>
</feature>
<feature type="region of interest" description="3 X 20 AA approximate repeats">
    <location>
        <begin position="405"/>
        <end position="448"/>
    </location>
</feature>
<feature type="region of interest" description="Disordered" evidence="1">
    <location>
        <begin position="460"/>
        <end position="489"/>
    </location>
</feature>
<feature type="region of interest" description="Disordered" evidence="1">
    <location>
        <begin position="516"/>
        <end position="571"/>
    </location>
</feature>
<feature type="region of interest" description="9 X 12 AA approximate repeats">
    <location>
        <begin position="534"/>
        <end position="728"/>
    </location>
</feature>
<feature type="region of interest" description="Disordered" evidence="1">
    <location>
        <begin position="591"/>
        <end position="620"/>
    </location>
</feature>
<feature type="region of interest" description="Disordered" evidence="1">
    <location>
        <begin position="649"/>
        <end position="681"/>
    </location>
</feature>
<feature type="region of interest" description="Disordered" evidence="1">
    <location>
        <begin position="697"/>
        <end position="758"/>
    </location>
</feature>
<feature type="region of interest" description="Disordered" evidence="1">
    <location>
        <begin position="806"/>
        <end position="838"/>
    </location>
</feature>
<feature type="short sequence motif" description="KKRVK motif; Required for interaction with GLC7, endocytosis and actin cytoskeleton organization" evidence="2">
    <location>
        <begin position="272"/>
        <end position="276"/>
    </location>
</feature>
<feature type="compositionally biased region" description="Polar residues" evidence="1">
    <location>
        <begin position="48"/>
        <end position="85"/>
    </location>
</feature>
<feature type="compositionally biased region" description="Polar residues" evidence="1">
    <location>
        <begin position="284"/>
        <end position="296"/>
    </location>
</feature>
<feature type="compositionally biased region" description="Polar residues" evidence="1">
    <location>
        <begin position="339"/>
        <end position="348"/>
    </location>
</feature>
<feature type="compositionally biased region" description="Polar residues" evidence="1">
    <location>
        <begin position="462"/>
        <end position="481"/>
    </location>
</feature>
<feature type="compositionally biased region" description="Polar residues" evidence="1">
    <location>
        <begin position="594"/>
        <end position="620"/>
    </location>
</feature>
<feature type="compositionally biased region" description="Low complexity" evidence="1">
    <location>
        <begin position="651"/>
        <end position="663"/>
    </location>
</feature>
<feature type="compositionally biased region" description="Polar residues" evidence="1">
    <location>
        <begin position="697"/>
        <end position="727"/>
    </location>
</feature>
<feature type="compositionally biased region" description="Low complexity" evidence="1">
    <location>
        <begin position="728"/>
        <end position="745"/>
    </location>
</feature>
<feature type="compositionally biased region" description="Polar residues" evidence="1">
    <location>
        <begin position="746"/>
        <end position="758"/>
    </location>
</feature>
<feature type="compositionally biased region" description="Polar residues" evidence="1">
    <location>
        <begin position="806"/>
        <end position="815"/>
    </location>
</feature>
<feature type="compositionally biased region" description="Low complexity" evidence="1">
    <location>
        <begin position="823"/>
        <end position="835"/>
    </location>
</feature>
<feature type="modified residue" description="Phosphothreonine; by PRK1" evidence="4">
    <location>
        <position position="416"/>
    </location>
</feature>
<feature type="modified residue" description="Phosphothreonine; by PRK1" evidence="4">
    <location>
        <position position="450"/>
    </location>
</feature>
<feature type="modified residue" description="Phosphothreonine; by PRK1" evidence="4">
    <location>
        <position position="490"/>
    </location>
</feature>
<feature type="modified residue" description="Phosphoserine" evidence="7">
    <location>
        <position position="564"/>
    </location>
</feature>
<name>SCD5_YEAST</name>
<sequence length="872" mass="97305">MSFDWLNVPGLDLSSGDQAEKRPSNGLGPPSVSFDFGINTAAPHDSSFWDQGSRSHSDTTLSYRNNHSNTAADNATNVSSPQKDNPPNGEVRTLSGGDVYAESPEDMQVPLSLSQNQLTHEEIRTYLRWYHYICLRTHGKLVRLNDVFRFLTNFNLSQKVKDRIVEIFRSCKNALNIGQFFAVLRLVSRAIIYGILPLRRMILEKAPVPKPRPILSSENHEEVYEEVEDDDSSAKTGDQKVDFDSFASLLLTGKTTRKRVRRRIKNLNFKSKKVRFSEHITFQDPPNLNQESSNNSEARKQDPDAEDEDQDSNNDSPLDFTLPMDQLLKRLYKRRKNSGLVSSLPSEQQETEEEKKVLEDMKDSLSHFKQIQTVDSASLPISSVFLQNGNTLPTSNVNNTTVPQQLPLEPLKPTATGSANHLVREEYNQGLHPSNGAIQTGLQPLKPTATGSANYLMRSHMEQPQSIKPSSTPETVTNSGGLQPLKPTATGSANYLMKQHISPSVNNPVSSMFQAQFTNQSSSPQSTGPAFLNSPNITLPQSNQQQPYQEVNPTQAKIEPSNISPQHTYSNNVRINNGNIVSMPKVEITGAFPPQNTLPQHQQSHLLSPQNTIPQHQRSQLISPQNTFTQNQPILSPQHTYSNNQATMISPQNTYTNNQQQPQHLPPPPPPRAQQQQQGAIVPPQHMYSNVQKQNNLVPTQPSYTNSPSIQSPNFLSPQNAANSYFQSLLSSSPSPNPTPSNASTVNGNNASNGISSFQNTSAAMNNTQSHQTYIQQQQQQQTQQRIYGGQLSQMQQHPGQLHLNNSDIHSQPNKPNYGMLGQQVHQQQQQQQQQFPFTADVNRSNSSDILGNLQSLQQQVDALQIQYNRRP</sequence>
<comment type="function">
    <text evidence="2 3 6">Regulates both fluid phase and receptor-mediated endocytosis (PubMed:12356757, PubMed:12956961). Involved in vesicular transport at a late stage of the secretory pathway (PubMed:8688556). Regulates actin cytoskeleton organization (PubMed:12356757, PubMed:12956961).</text>
</comment>
<comment type="subunit">
    <text evidence="2">Interacts (via KKVRF motif) with phosphatase GLC7.</text>
</comment>
<comment type="interaction">
    <interactant intactId="EBI-16685">
        <id>P34758</id>
    </interactant>
    <interactant intactId="EBI-13715">
        <id>P32598</id>
        <label>GLC7</label>
    </interactant>
    <organismsDiffer>false</organismsDiffer>
    <experiments>5</experiments>
</comment>
<comment type="subcellular location">
    <subcellularLocation>
        <location evidence="6">Membrane</location>
        <topology evidence="6">Peripheral membrane protein</topology>
    </subcellularLocation>
</comment>
<comment type="PTM">
    <text evidence="3 4">Phosphorylation by PRK1 and/or AKL1 on Thr-416, Thr-450 and Thr-490 of repeats 1-1, 1-2 and/or 1-3 negatively regulates SCD5 function in endocytosis and actin cytoskeleton organization.</text>
</comment>
<comment type="miscellaneous">
    <text evidence="5">Present with 704 molecules/cell in log phase SD medium.</text>
</comment>
<keyword id="KW-0254">Endocytosis</keyword>
<keyword id="KW-0472">Membrane</keyword>
<keyword id="KW-0597">Phosphoprotein</keyword>
<keyword id="KW-0653">Protein transport</keyword>
<keyword id="KW-1185">Reference proteome</keyword>
<keyword id="KW-0677">Repeat</keyword>
<keyword id="KW-0813">Transport</keyword>
<protein>
    <recommendedName>
        <fullName>Protein SCD5</fullName>
    </recommendedName>
    <alternativeName>
        <fullName>Protein FTB1</fullName>
    </alternativeName>
</protein>
<proteinExistence type="evidence at protein level"/>
<reference key="1">
    <citation type="journal article" date="1996" name="Mol. Biol. Cell">
        <title>SCD5, a suppressor of clathrin deficiency, encodes a novel protein with a late secretory function in yeast.</title>
        <authorList>
            <person name="Nelson K.K."/>
            <person name="Holmer M."/>
            <person name="Lemmon S.K."/>
        </authorList>
    </citation>
    <scope>NUCLEOTIDE SEQUENCE [MRNA]</scope>
    <scope>FUNCTION</scope>
    <scope>SUBCELLULAR LOCATION</scope>
    <source>
        <strain>ATCC 204508 / S288c</strain>
    </source>
</reference>
<reference key="2">
    <citation type="submission" date="1993-11" db="EMBL/GenBank/DDBJ databases">
        <authorList>
            <person name="Wang W."/>
            <person name="Zheng L."/>
            <person name="Chan C."/>
        </authorList>
    </citation>
    <scope>NUCLEOTIDE SEQUENCE</scope>
    <source>
        <strain>ATCC 204508 / S288c</strain>
    </source>
</reference>
<reference key="3">
    <citation type="submission" date="1996-01" db="EMBL/GenBank/DDBJ databases">
        <authorList>
            <person name="Song J.M."/>
            <person name="Cheung E."/>
            <person name="Rabinowitz J.C."/>
        </authorList>
    </citation>
    <scope>NUCLEOTIDE SEQUENCE</scope>
    <source>
        <strain>S288c / GRF88</strain>
    </source>
</reference>
<reference key="4">
    <citation type="journal article" date="1996" name="Yeast">
        <title>Sequence of 29 kb around the PDR10 locus on the right arm of Saccharomyces cerevisiae chromosome XV: similarity to part of chromosome I.</title>
        <authorList>
            <person name="Parle-McDermott A.G."/>
            <person name="Hand N.J."/>
            <person name="Goulding S.E."/>
            <person name="Wolfe K.H."/>
        </authorList>
    </citation>
    <scope>NUCLEOTIDE SEQUENCE [GENOMIC DNA]</scope>
</reference>
<reference key="5">
    <citation type="journal article" date="1997" name="Nature">
        <title>The nucleotide sequence of Saccharomyces cerevisiae chromosome XV.</title>
        <authorList>
            <person name="Dujon B."/>
            <person name="Albermann K."/>
            <person name="Aldea M."/>
            <person name="Alexandraki D."/>
            <person name="Ansorge W."/>
            <person name="Arino J."/>
            <person name="Benes V."/>
            <person name="Bohn C."/>
            <person name="Bolotin-Fukuhara M."/>
            <person name="Bordonne R."/>
            <person name="Boyer J."/>
            <person name="Camasses A."/>
            <person name="Casamayor A."/>
            <person name="Casas C."/>
            <person name="Cheret G."/>
            <person name="Cziepluch C."/>
            <person name="Daignan-Fornier B."/>
            <person name="Dang V.-D."/>
            <person name="de Haan M."/>
            <person name="Delius H."/>
            <person name="Durand P."/>
            <person name="Fairhead C."/>
            <person name="Feldmann H."/>
            <person name="Gaillon L."/>
            <person name="Galisson F."/>
            <person name="Gamo F.-J."/>
            <person name="Gancedo C."/>
            <person name="Goffeau A."/>
            <person name="Goulding S.E."/>
            <person name="Grivell L.A."/>
            <person name="Habbig B."/>
            <person name="Hand N.J."/>
            <person name="Hani J."/>
            <person name="Hattenhorst U."/>
            <person name="Hebling U."/>
            <person name="Hernando Y."/>
            <person name="Herrero E."/>
            <person name="Heumann K."/>
            <person name="Hiesel R."/>
            <person name="Hilger F."/>
            <person name="Hofmann B."/>
            <person name="Hollenberg C.P."/>
            <person name="Hughes B."/>
            <person name="Jauniaux J.-C."/>
            <person name="Kalogeropoulos A."/>
            <person name="Katsoulou C."/>
            <person name="Kordes E."/>
            <person name="Lafuente M.J."/>
            <person name="Landt O."/>
            <person name="Louis E.J."/>
            <person name="Maarse A.C."/>
            <person name="Madania A."/>
            <person name="Mannhaupt G."/>
            <person name="Marck C."/>
            <person name="Martin R.P."/>
            <person name="Mewes H.-W."/>
            <person name="Michaux G."/>
            <person name="Paces V."/>
            <person name="Parle-McDermott A.G."/>
            <person name="Pearson B.M."/>
            <person name="Perrin A."/>
            <person name="Pettersson B."/>
            <person name="Poch O."/>
            <person name="Pohl T.M."/>
            <person name="Poirey R."/>
            <person name="Portetelle D."/>
            <person name="Pujol A."/>
            <person name="Purnelle B."/>
            <person name="Ramezani Rad M."/>
            <person name="Rechmann S."/>
            <person name="Schwager C."/>
            <person name="Schweizer M."/>
            <person name="Sor F."/>
            <person name="Sterky F."/>
            <person name="Tarassov I.A."/>
            <person name="Teodoru C."/>
            <person name="Tettelin H."/>
            <person name="Thierry A."/>
            <person name="Tobiasch E."/>
            <person name="Tzermia M."/>
            <person name="Uhlen M."/>
            <person name="Unseld M."/>
            <person name="Valens M."/>
            <person name="Vandenbol M."/>
            <person name="Vetter I."/>
            <person name="Vlcek C."/>
            <person name="Voet M."/>
            <person name="Volckaert G."/>
            <person name="Voss H."/>
            <person name="Wambutt R."/>
            <person name="Wedler H."/>
            <person name="Wiemann S."/>
            <person name="Winsor B."/>
            <person name="Wolfe K.H."/>
            <person name="Zollner A."/>
            <person name="Zumstein E."/>
            <person name="Kleine K."/>
        </authorList>
    </citation>
    <scope>NUCLEOTIDE SEQUENCE [LARGE SCALE GENOMIC DNA]</scope>
    <source>
        <strain>ATCC 204508 / S288c</strain>
    </source>
</reference>
<reference key="6">
    <citation type="journal article" date="2014" name="G3 (Bethesda)">
        <title>The reference genome sequence of Saccharomyces cerevisiae: Then and now.</title>
        <authorList>
            <person name="Engel S.R."/>
            <person name="Dietrich F.S."/>
            <person name="Fisk D.G."/>
            <person name="Binkley G."/>
            <person name="Balakrishnan R."/>
            <person name="Costanzo M.C."/>
            <person name="Dwight S.S."/>
            <person name="Hitz B.C."/>
            <person name="Karra K."/>
            <person name="Nash R.S."/>
            <person name="Weng S."/>
            <person name="Wong E.D."/>
            <person name="Lloyd P."/>
            <person name="Skrzypek M.S."/>
            <person name="Miyasato S.R."/>
            <person name="Simison M."/>
            <person name="Cherry J.M."/>
        </authorList>
    </citation>
    <scope>GENOME REANNOTATION</scope>
    <source>
        <strain>ATCC 204508 / S288c</strain>
    </source>
</reference>
<reference key="7">
    <citation type="journal article" date="2002" name="J. Biol. Chem.">
        <title>Protein phosphatase-1 binding to scd5p is important for regulation of actin organization and endocytosis in yeast.</title>
        <authorList>
            <person name="Chang J.S."/>
            <person name="Henry K."/>
            <person name="Wolf B.L."/>
            <person name="Geli M."/>
            <person name="Lemmon S.K."/>
        </authorList>
    </citation>
    <scope>FUNCTION</scope>
    <scope>INTERACTION WITH GLC7</scope>
    <scope>MOTIF</scope>
</reference>
<reference key="8">
    <citation type="journal article" date="2003" name="Curr. Biol.">
        <title>The actin-regulating kinase Prk1p negatively regulates Scd5p, a suppressor of clathrin deficiency, in actin organization and endocytosis.</title>
        <authorList>
            <person name="Henry K.R."/>
            <person name="D'Hondt K."/>
            <person name="Chang J.S."/>
            <person name="Nix D.A."/>
            <person name="Cope M.J."/>
            <person name="Chan C.S."/>
            <person name="Drubin D.G."/>
            <person name="Lemmon S.K."/>
        </authorList>
    </citation>
    <scope>FUNCTION</scope>
    <scope>PHOSPHORYLATION</scope>
</reference>
<reference key="9">
    <citation type="journal article" date="2003" name="Mol. Biol. Cell">
        <title>Identification of novel recognition motifs and regulatory targets for the yeast actin-regulating kinase Prk1p.</title>
        <authorList>
            <person name="Huang B."/>
            <person name="Zeng G."/>
            <person name="Ng A.Y."/>
            <person name="Cai M."/>
        </authorList>
    </citation>
    <scope>PHOSPHORYLATION AT THR-416; THR-450 AND THR-490</scope>
</reference>
<reference key="10">
    <citation type="journal article" date="2003" name="Nature">
        <title>Global analysis of protein expression in yeast.</title>
        <authorList>
            <person name="Ghaemmaghami S."/>
            <person name="Huh W.-K."/>
            <person name="Bower K."/>
            <person name="Howson R.W."/>
            <person name="Belle A."/>
            <person name="Dephoure N."/>
            <person name="O'Shea E.K."/>
            <person name="Weissman J.S."/>
        </authorList>
    </citation>
    <scope>LEVEL OF PROTEIN EXPRESSION [LARGE SCALE ANALYSIS]</scope>
</reference>
<reference key="11">
    <citation type="journal article" date="2008" name="Mol. Cell. Proteomics">
        <title>A multidimensional chromatography technology for in-depth phosphoproteome analysis.</title>
        <authorList>
            <person name="Albuquerque C.P."/>
            <person name="Smolka M.B."/>
            <person name="Payne S.H."/>
            <person name="Bafna V."/>
            <person name="Eng J."/>
            <person name="Zhou H."/>
        </authorList>
    </citation>
    <scope>PHOSPHORYLATION [LARGE SCALE ANALYSIS] AT SER-564</scope>
    <scope>IDENTIFICATION BY MASS SPECTROMETRY [LARGE SCALE ANALYSIS]</scope>
</reference>
<reference key="12">
    <citation type="journal article" date="2009" name="Science">
        <title>Global analysis of Cdk1 substrate phosphorylation sites provides insights into evolution.</title>
        <authorList>
            <person name="Holt L.J."/>
            <person name="Tuch B.B."/>
            <person name="Villen J."/>
            <person name="Johnson A.D."/>
            <person name="Gygi S.P."/>
            <person name="Morgan D.O."/>
        </authorList>
    </citation>
    <scope>IDENTIFICATION BY MASS SPECTROMETRY [LARGE SCALE ANALYSIS]</scope>
</reference>
<dbReference type="EMBL" id="U03492">
    <property type="protein sequence ID" value="AAB09719.1"/>
    <property type="molecule type" value="mRNA"/>
</dbReference>
<dbReference type="EMBL" id="U42227">
    <property type="protein sequence ID" value="AAA85443.1"/>
    <property type="molecule type" value="Genomic_DNA"/>
</dbReference>
<dbReference type="EMBL" id="Z49821">
    <property type="protein sequence ID" value="CAA89976.1"/>
    <property type="molecule type" value="Genomic_DNA"/>
</dbReference>
<dbReference type="EMBL" id="Z75237">
    <property type="protein sequence ID" value="CAA99650.1"/>
    <property type="molecule type" value="Genomic_DNA"/>
</dbReference>
<dbReference type="EMBL" id="BK006948">
    <property type="protein sequence ID" value="DAA11092.1"/>
    <property type="molecule type" value="Genomic_DNA"/>
</dbReference>
<dbReference type="PIR" id="S62061">
    <property type="entry name" value="S62061"/>
</dbReference>
<dbReference type="RefSeq" id="NP_014974.3">
    <property type="nucleotide sequence ID" value="NM_001183749.3"/>
</dbReference>
<dbReference type="BioGRID" id="34714">
    <property type="interactions" value="62"/>
</dbReference>
<dbReference type="DIP" id="DIP-1341N"/>
<dbReference type="ELM" id="P34758"/>
<dbReference type="FunCoup" id="P34758">
    <property type="interactions" value="143"/>
</dbReference>
<dbReference type="IntAct" id="P34758">
    <property type="interactions" value="6"/>
</dbReference>
<dbReference type="MINT" id="P34758"/>
<dbReference type="STRING" id="4932.YOR329C"/>
<dbReference type="GlyGen" id="P34758">
    <property type="glycosylation" value="3 sites, 1 O-linked glycan (2 sites)"/>
</dbReference>
<dbReference type="iPTMnet" id="P34758"/>
<dbReference type="PaxDb" id="4932-YOR329C"/>
<dbReference type="PeptideAtlas" id="P34758"/>
<dbReference type="EnsemblFungi" id="YOR329C_mRNA">
    <property type="protein sequence ID" value="YOR329C"/>
    <property type="gene ID" value="YOR329C"/>
</dbReference>
<dbReference type="GeneID" id="854507"/>
<dbReference type="KEGG" id="sce:YOR329C"/>
<dbReference type="AGR" id="SGD:S000005856"/>
<dbReference type="SGD" id="S000005856">
    <property type="gene designation" value="SCD5"/>
</dbReference>
<dbReference type="VEuPathDB" id="FungiDB:YOR329C"/>
<dbReference type="eggNOG" id="ENOG502QQ7A">
    <property type="taxonomic scope" value="Eukaryota"/>
</dbReference>
<dbReference type="HOGENOM" id="CLU_016142_0_0_1"/>
<dbReference type="InParanoid" id="P34758"/>
<dbReference type="OMA" id="YICLRTH"/>
<dbReference type="OrthoDB" id="2553626at2759"/>
<dbReference type="BioCyc" id="YEAST:G3O-33806-MONOMER"/>
<dbReference type="BioGRID-ORCS" id="854507">
    <property type="hits" value="7 hits in 10 CRISPR screens"/>
</dbReference>
<dbReference type="PRO" id="PR:P34758"/>
<dbReference type="Proteomes" id="UP000002311">
    <property type="component" value="Chromosome XV"/>
</dbReference>
<dbReference type="RNAct" id="P34758">
    <property type="molecule type" value="protein"/>
</dbReference>
<dbReference type="GO" id="GO:0030479">
    <property type="term" value="C:actin cortical patch"/>
    <property type="evidence" value="ECO:0000314"/>
    <property type="project" value="SGD"/>
</dbReference>
<dbReference type="GO" id="GO:0016020">
    <property type="term" value="C:membrane"/>
    <property type="evidence" value="ECO:0007669"/>
    <property type="project" value="UniProtKB-SubCell"/>
</dbReference>
<dbReference type="GO" id="GO:0005634">
    <property type="term" value="C:nucleus"/>
    <property type="evidence" value="ECO:0000315"/>
    <property type="project" value="SGD"/>
</dbReference>
<dbReference type="GO" id="GO:0008157">
    <property type="term" value="F:protein phosphatase 1 binding"/>
    <property type="evidence" value="ECO:0000314"/>
    <property type="project" value="SGD"/>
</dbReference>
<dbReference type="GO" id="GO:0030866">
    <property type="term" value="P:cortical actin cytoskeleton organization"/>
    <property type="evidence" value="ECO:0000315"/>
    <property type="project" value="SGD"/>
</dbReference>
<dbReference type="GO" id="GO:0006897">
    <property type="term" value="P:endocytosis"/>
    <property type="evidence" value="ECO:0007669"/>
    <property type="project" value="UniProtKB-KW"/>
</dbReference>
<dbReference type="GO" id="GO:2000370">
    <property type="term" value="P:positive regulation of clathrin-dependent endocytosis"/>
    <property type="evidence" value="ECO:0000315"/>
    <property type="project" value="SGD"/>
</dbReference>
<dbReference type="GO" id="GO:0009306">
    <property type="term" value="P:protein secretion"/>
    <property type="evidence" value="ECO:0000315"/>
    <property type="project" value="SGD"/>
</dbReference>
<accession>P34758</accession>
<accession>D6W326</accession>